<organism>
    <name type="scientific">Parasynechococcus marenigrum (strain WH8102)</name>
    <dbReference type="NCBI Taxonomy" id="84588"/>
    <lineage>
        <taxon>Bacteria</taxon>
        <taxon>Bacillati</taxon>
        <taxon>Cyanobacteriota</taxon>
        <taxon>Cyanophyceae</taxon>
        <taxon>Synechococcales</taxon>
        <taxon>Prochlorococcaceae</taxon>
        <taxon>Parasynechococcus</taxon>
        <taxon>Parasynechococcus marenigrum</taxon>
    </lineage>
</organism>
<feature type="chain" id="PRO_0000146616" description="Small ribosomal subunit protein uS10">
    <location>
        <begin position="1"/>
        <end position="106"/>
    </location>
</feature>
<name>RS10_PARMW</name>
<comment type="function">
    <text evidence="1">Involved in the binding of tRNA to the ribosomes.</text>
</comment>
<comment type="subunit">
    <text evidence="1">Part of the 30S ribosomal subunit.</text>
</comment>
<comment type="similarity">
    <text evidence="1">Belongs to the universal ribosomal protein uS10 family.</text>
</comment>
<sequence length="106" mass="12058">MSTAIAQQKIRIRLKAFDRRMLDLSCDKIIETADQTAATAIGPIPLPTKRKIYCVLRSPHVDKDSREHFETRTHRRIIDIYSPSAKTIDALMKLDLPSGVDIEVKL</sequence>
<accession>Q7U4D0</accession>
<protein>
    <recommendedName>
        <fullName evidence="1">Small ribosomal subunit protein uS10</fullName>
    </recommendedName>
    <alternativeName>
        <fullName evidence="2">30S ribosomal protein S10</fullName>
    </alternativeName>
</protein>
<proteinExistence type="inferred from homology"/>
<dbReference type="EMBL" id="BX569694">
    <property type="protein sequence ID" value="CAE08654.1"/>
    <property type="molecule type" value="Genomic_DNA"/>
</dbReference>
<dbReference type="RefSeq" id="WP_011128995.1">
    <property type="nucleotide sequence ID" value="NC_005070.1"/>
</dbReference>
<dbReference type="SMR" id="Q7U4D0"/>
<dbReference type="STRING" id="84588.SYNW2139"/>
<dbReference type="KEGG" id="syw:SYNW2139"/>
<dbReference type="eggNOG" id="COG0051">
    <property type="taxonomic scope" value="Bacteria"/>
</dbReference>
<dbReference type="HOGENOM" id="CLU_122625_1_3_3"/>
<dbReference type="Proteomes" id="UP000001422">
    <property type="component" value="Chromosome"/>
</dbReference>
<dbReference type="GO" id="GO:1990904">
    <property type="term" value="C:ribonucleoprotein complex"/>
    <property type="evidence" value="ECO:0007669"/>
    <property type="project" value="UniProtKB-KW"/>
</dbReference>
<dbReference type="GO" id="GO:0005840">
    <property type="term" value="C:ribosome"/>
    <property type="evidence" value="ECO:0007669"/>
    <property type="project" value="UniProtKB-KW"/>
</dbReference>
<dbReference type="GO" id="GO:0003735">
    <property type="term" value="F:structural constituent of ribosome"/>
    <property type="evidence" value="ECO:0007669"/>
    <property type="project" value="InterPro"/>
</dbReference>
<dbReference type="GO" id="GO:0000049">
    <property type="term" value="F:tRNA binding"/>
    <property type="evidence" value="ECO:0007669"/>
    <property type="project" value="UniProtKB-UniRule"/>
</dbReference>
<dbReference type="GO" id="GO:0006412">
    <property type="term" value="P:translation"/>
    <property type="evidence" value="ECO:0007669"/>
    <property type="project" value="UniProtKB-UniRule"/>
</dbReference>
<dbReference type="FunFam" id="3.30.70.600:FF:000001">
    <property type="entry name" value="30S ribosomal protein S10"/>
    <property type="match status" value="1"/>
</dbReference>
<dbReference type="Gene3D" id="3.30.70.600">
    <property type="entry name" value="Ribosomal protein S10 domain"/>
    <property type="match status" value="1"/>
</dbReference>
<dbReference type="HAMAP" id="MF_00508">
    <property type="entry name" value="Ribosomal_uS10"/>
    <property type="match status" value="1"/>
</dbReference>
<dbReference type="InterPro" id="IPR001848">
    <property type="entry name" value="Ribosomal_uS10"/>
</dbReference>
<dbReference type="InterPro" id="IPR027486">
    <property type="entry name" value="Ribosomal_uS10_dom"/>
</dbReference>
<dbReference type="InterPro" id="IPR036838">
    <property type="entry name" value="Ribosomal_uS10_dom_sf"/>
</dbReference>
<dbReference type="NCBIfam" id="NF001861">
    <property type="entry name" value="PRK00596.1"/>
    <property type="match status" value="1"/>
</dbReference>
<dbReference type="NCBIfam" id="TIGR01049">
    <property type="entry name" value="rpsJ_bact"/>
    <property type="match status" value="1"/>
</dbReference>
<dbReference type="PANTHER" id="PTHR11700">
    <property type="entry name" value="30S RIBOSOMAL PROTEIN S10 FAMILY MEMBER"/>
    <property type="match status" value="1"/>
</dbReference>
<dbReference type="Pfam" id="PF00338">
    <property type="entry name" value="Ribosomal_S10"/>
    <property type="match status" value="1"/>
</dbReference>
<dbReference type="PRINTS" id="PR00971">
    <property type="entry name" value="RIBOSOMALS10"/>
</dbReference>
<dbReference type="SMART" id="SM01403">
    <property type="entry name" value="Ribosomal_S10"/>
    <property type="match status" value="1"/>
</dbReference>
<dbReference type="SUPFAM" id="SSF54999">
    <property type="entry name" value="Ribosomal protein S10"/>
    <property type="match status" value="1"/>
</dbReference>
<reference key="1">
    <citation type="journal article" date="2003" name="Nature">
        <title>The genome of a motile marine Synechococcus.</title>
        <authorList>
            <person name="Palenik B."/>
            <person name="Brahamsha B."/>
            <person name="Larimer F.W."/>
            <person name="Land M.L."/>
            <person name="Hauser L."/>
            <person name="Chain P."/>
            <person name="Lamerdin J.E."/>
            <person name="Regala W."/>
            <person name="Allen E.E."/>
            <person name="McCarren J."/>
            <person name="Paulsen I.T."/>
            <person name="Dufresne A."/>
            <person name="Partensky F."/>
            <person name="Webb E.A."/>
            <person name="Waterbury J."/>
        </authorList>
    </citation>
    <scope>NUCLEOTIDE SEQUENCE [LARGE SCALE GENOMIC DNA]</scope>
    <source>
        <strain>WH8102</strain>
    </source>
</reference>
<gene>
    <name evidence="1" type="primary">rpsJ</name>
    <name evidence="1" type="synonym">rps10</name>
    <name type="ordered locus">SYNW2139</name>
</gene>
<evidence type="ECO:0000255" key="1">
    <source>
        <dbReference type="HAMAP-Rule" id="MF_00508"/>
    </source>
</evidence>
<evidence type="ECO:0000305" key="2"/>
<keyword id="KW-0687">Ribonucleoprotein</keyword>
<keyword id="KW-0689">Ribosomal protein</keyword>